<reference key="1">
    <citation type="journal article" date="2008" name="J. Bacteriol.">
        <title>The pangenome structure of Escherichia coli: comparative genomic analysis of E. coli commensal and pathogenic isolates.</title>
        <authorList>
            <person name="Rasko D.A."/>
            <person name="Rosovitz M.J."/>
            <person name="Myers G.S.A."/>
            <person name="Mongodin E.F."/>
            <person name="Fricke W.F."/>
            <person name="Gajer P."/>
            <person name="Crabtree J."/>
            <person name="Sebaihia M."/>
            <person name="Thomson N.R."/>
            <person name="Chaudhuri R."/>
            <person name="Henderson I.R."/>
            <person name="Sperandio V."/>
            <person name="Ravel J."/>
        </authorList>
    </citation>
    <scope>NUCLEOTIDE SEQUENCE [LARGE SCALE GENOMIC DNA]</scope>
    <source>
        <strain>HS</strain>
    </source>
</reference>
<dbReference type="EC" id="6.1.1.19" evidence="1"/>
<dbReference type="EMBL" id="CP000802">
    <property type="protein sequence ID" value="ABV06282.1"/>
    <property type="molecule type" value="Genomic_DNA"/>
</dbReference>
<dbReference type="RefSeq" id="WP_001025329.1">
    <property type="nucleotide sequence ID" value="NC_009800.1"/>
</dbReference>
<dbReference type="SMR" id="A8A178"/>
<dbReference type="KEGG" id="ecx:EcHS_A1971"/>
<dbReference type="HOGENOM" id="CLU_006406_5_1_6"/>
<dbReference type="GO" id="GO:0005737">
    <property type="term" value="C:cytoplasm"/>
    <property type="evidence" value="ECO:0007669"/>
    <property type="project" value="UniProtKB-SubCell"/>
</dbReference>
<dbReference type="GO" id="GO:0004814">
    <property type="term" value="F:arginine-tRNA ligase activity"/>
    <property type="evidence" value="ECO:0007669"/>
    <property type="project" value="UniProtKB-UniRule"/>
</dbReference>
<dbReference type="GO" id="GO:0005524">
    <property type="term" value="F:ATP binding"/>
    <property type="evidence" value="ECO:0007669"/>
    <property type="project" value="UniProtKB-UniRule"/>
</dbReference>
<dbReference type="GO" id="GO:0006420">
    <property type="term" value="P:arginyl-tRNA aminoacylation"/>
    <property type="evidence" value="ECO:0007669"/>
    <property type="project" value="UniProtKB-UniRule"/>
</dbReference>
<dbReference type="CDD" id="cd07956">
    <property type="entry name" value="Anticodon_Ia_Arg"/>
    <property type="match status" value="1"/>
</dbReference>
<dbReference type="CDD" id="cd00671">
    <property type="entry name" value="ArgRS_core"/>
    <property type="match status" value="1"/>
</dbReference>
<dbReference type="FunFam" id="1.10.730.10:FF:000001">
    <property type="entry name" value="Arginine--tRNA ligase"/>
    <property type="match status" value="1"/>
</dbReference>
<dbReference type="FunFam" id="3.30.1360.70:FF:000001">
    <property type="entry name" value="Arginine--tRNA ligase"/>
    <property type="match status" value="1"/>
</dbReference>
<dbReference type="FunFam" id="3.40.50.620:FF:000030">
    <property type="entry name" value="Arginine--tRNA ligase"/>
    <property type="match status" value="1"/>
</dbReference>
<dbReference type="Gene3D" id="3.30.1360.70">
    <property type="entry name" value="Arginyl tRNA synthetase N-terminal domain"/>
    <property type="match status" value="1"/>
</dbReference>
<dbReference type="Gene3D" id="3.40.50.620">
    <property type="entry name" value="HUPs"/>
    <property type="match status" value="1"/>
</dbReference>
<dbReference type="Gene3D" id="1.10.730.10">
    <property type="entry name" value="Isoleucyl-tRNA Synthetase, Domain 1"/>
    <property type="match status" value="1"/>
</dbReference>
<dbReference type="HAMAP" id="MF_00123">
    <property type="entry name" value="Arg_tRNA_synth"/>
    <property type="match status" value="1"/>
</dbReference>
<dbReference type="InterPro" id="IPR001412">
    <property type="entry name" value="aa-tRNA-synth_I_CS"/>
</dbReference>
<dbReference type="InterPro" id="IPR001278">
    <property type="entry name" value="Arg-tRNA-ligase"/>
</dbReference>
<dbReference type="InterPro" id="IPR005148">
    <property type="entry name" value="Arg-tRNA-synth_N"/>
</dbReference>
<dbReference type="InterPro" id="IPR036695">
    <property type="entry name" value="Arg-tRNA-synth_N_sf"/>
</dbReference>
<dbReference type="InterPro" id="IPR035684">
    <property type="entry name" value="ArgRS_core"/>
</dbReference>
<dbReference type="InterPro" id="IPR008909">
    <property type="entry name" value="DALR_anticod-bd"/>
</dbReference>
<dbReference type="InterPro" id="IPR014729">
    <property type="entry name" value="Rossmann-like_a/b/a_fold"/>
</dbReference>
<dbReference type="InterPro" id="IPR009080">
    <property type="entry name" value="tRNAsynth_Ia_anticodon-bd"/>
</dbReference>
<dbReference type="NCBIfam" id="TIGR00456">
    <property type="entry name" value="argS"/>
    <property type="match status" value="1"/>
</dbReference>
<dbReference type="PANTHER" id="PTHR11956:SF5">
    <property type="entry name" value="ARGININE--TRNA LIGASE, CYTOPLASMIC"/>
    <property type="match status" value="1"/>
</dbReference>
<dbReference type="PANTHER" id="PTHR11956">
    <property type="entry name" value="ARGINYL-TRNA SYNTHETASE"/>
    <property type="match status" value="1"/>
</dbReference>
<dbReference type="Pfam" id="PF03485">
    <property type="entry name" value="Arg_tRNA_synt_N"/>
    <property type="match status" value="1"/>
</dbReference>
<dbReference type="Pfam" id="PF05746">
    <property type="entry name" value="DALR_1"/>
    <property type="match status" value="1"/>
</dbReference>
<dbReference type="Pfam" id="PF00750">
    <property type="entry name" value="tRNA-synt_1d"/>
    <property type="match status" value="1"/>
</dbReference>
<dbReference type="PRINTS" id="PR01038">
    <property type="entry name" value="TRNASYNTHARG"/>
</dbReference>
<dbReference type="SMART" id="SM01016">
    <property type="entry name" value="Arg_tRNA_synt_N"/>
    <property type="match status" value="1"/>
</dbReference>
<dbReference type="SMART" id="SM00836">
    <property type="entry name" value="DALR_1"/>
    <property type="match status" value="1"/>
</dbReference>
<dbReference type="SUPFAM" id="SSF47323">
    <property type="entry name" value="Anticodon-binding domain of a subclass of class I aminoacyl-tRNA synthetases"/>
    <property type="match status" value="1"/>
</dbReference>
<dbReference type="SUPFAM" id="SSF55190">
    <property type="entry name" value="Arginyl-tRNA synthetase (ArgRS), N-terminal 'additional' domain"/>
    <property type="match status" value="1"/>
</dbReference>
<dbReference type="SUPFAM" id="SSF52374">
    <property type="entry name" value="Nucleotidylyl transferase"/>
    <property type="match status" value="1"/>
</dbReference>
<dbReference type="PROSITE" id="PS00178">
    <property type="entry name" value="AA_TRNA_LIGASE_I"/>
    <property type="match status" value="1"/>
</dbReference>
<proteinExistence type="inferred from homology"/>
<accession>A8A178</accession>
<comment type="catalytic activity">
    <reaction evidence="1">
        <text>tRNA(Arg) + L-arginine + ATP = L-arginyl-tRNA(Arg) + AMP + diphosphate</text>
        <dbReference type="Rhea" id="RHEA:20301"/>
        <dbReference type="Rhea" id="RHEA-COMP:9658"/>
        <dbReference type="Rhea" id="RHEA-COMP:9673"/>
        <dbReference type="ChEBI" id="CHEBI:30616"/>
        <dbReference type="ChEBI" id="CHEBI:32682"/>
        <dbReference type="ChEBI" id="CHEBI:33019"/>
        <dbReference type="ChEBI" id="CHEBI:78442"/>
        <dbReference type="ChEBI" id="CHEBI:78513"/>
        <dbReference type="ChEBI" id="CHEBI:456215"/>
        <dbReference type="EC" id="6.1.1.19"/>
    </reaction>
</comment>
<comment type="subunit">
    <text evidence="1">Monomer.</text>
</comment>
<comment type="subcellular location">
    <subcellularLocation>
        <location evidence="1">Cytoplasm</location>
    </subcellularLocation>
</comment>
<comment type="similarity">
    <text evidence="1">Belongs to the class-I aminoacyl-tRNA synthetase family.</text>
</comment>
<organism>
    <name type="scientific">Escherichia coli O9:H4 (strain HS)</name>
    <dbReference type="NCBI Taxonomy" id="331112"/>
    <lineage>
        <taxon>Bacteria</taxon>
        <taxon>Pseudomonadati</taxon>
        <taxon>Pseudomonadota</taxon>
        <taxon>Gammaproteobacteria</taxon>
        <taxon>Enterobacterales</taxon>
        <taxon>Enterobacteriaceae</taxon>
        <taxon>Escherichia</taxon>
    </lineage>
</organism>
<evidence type="ECO:0000255" key="1">
    <source>
        <dbReference type="HAMAP-Rule" id="MF_00123"/>
    </source>
</evidence>
<keyword id="KW-0030">Aminoacyl-tRNA synthetase</keyword>
<keyword id="KW-0067">ATP-binding</keyword>
<keyword id="KW-0963">Cytoplasm</keyword>
<keyword id="KW-0436">Ligase</keyword>
<keyword id="KW-0547">Nucleotide-binding</keyword>
<keyword id="KW-0648">Protein biosynthesis</keyword>
<feature type="chain" id="PRO_1000057809" description="Arginine--tRNA ligase">
    <location>
        <begin position="1"/>
        <end position="577"/>
    </location>
</feature>
<feature type="short sequence motif" description="'HIGH' region">
    <location>
        <begin position="122"/>
        <end position="132"/>
    </location>
</feature>
<name>SYR_ECOHS</name>
<sequence length="577" mass="64611">MNIQALLSEKVRQAMIAAGAPADCEPQVRQSAKVQFGDYQANGMMAVAKKLGMAPRQLAEQVLTHLDLNGIASKVEIAGPGFINIFLDPAFLAEHVQQALASDRLGVATPEKQTIVVDYSAPNVAKEMHVGHLRSTIIGDAAVRTLEFLGHKVIRANHVGDWGTQFGMLIAWLEKQQQENAGEMELADLEGFYRDAKKHYDEDEEFAERARNYVVKLQSGDEYFREMWRKLVDITMTQNQITYDRLNVTLTRDDVMGESLYNPMLPGIVADLKAKGLAVESEGATVVFLDEFKNKEGEPMGVIIQKKDGGYLYTTTDIACAKYRYETLHADRVLYYIDSRQHQHLMQAWAIVRKAGYVPESVPLEHHMFGMMLGKDGKPFKTRAGGTVKLADLLDEALERARRLVAEKNPDMPADGLEKLANAVGIGAVKYADLSKNRTTDYIFDWDNMLAFEGNTAPYMQYAYTRVLSVFRKAEIDEEQLAAAPVIIREDREAQLAARLLQFEETLTVVAREGTPHVMCAYLYDLAGLFSGFYEHCPILSAENEEVRNSRLKLAQLTAKTLKLGLDTLGIETVERM</sequence>
<protein>
    <recommendedName>
        <fullName evidence="1">Arginine--tRNA ligase</fullName>
        <ecNumber evidence="1">6.1.1.19</ecNumber>
    </recommendedName>
    <alternativeName>
        <fullName evidence="1">Arginyl-tRNA synthetase</fullName>
        <shortName evidence="1">ArgRS</shortName>
    </alternativeName>
</protein>
<gene>
    <name evidence="1" type="primary">argS</name>
    <name type="ordered locus">EcHS_A1971</name>
</gene>